<keyword id="KW-0456">Lyase</keyword>
<keyword id="KW-0658">Purine biosynthesis</keyword>
<keyword id="KW-1185">Reference proteome</keyword>
<evidence type="ECO:0000250" key="1"/>
<evidence type="ECO:0000250" key="2">
    <source>
        <dbReference type="UniProtKB" id="P0AB89"/>
    </source>
</evidence>
<evidence type="ECO:0000305" key="3"/>
<dbReference type="EC" id="4.3.2.2" evidence="2"/>
<dbReference type="EMBL" id="BA000003">
    <property type="protein sequence ID" value="BAB12973.1"/>
    <property type="molecule type" value="Genomic_DNA"/>
</dbReference>
<dbReference type="RefSeq" id="NP_240087.1">
    <property type="nucleotide sequence ID" value="NC_002528.1"/>
</dbReference>
<dbReference type="RefSeq" id="WP_009874217.1">
    <property type="nucleotide sequence ID" value="NC_002528.1"/>
</dbReference>
<dbReference type="SMR" id="P57351"/>
<dbReference type="STRING" id="563178.BUAP5A_258"/>
<dbReference type="EnsemblBacteria" id="BAB12973">
    <property type="protein sequence ID" value="BAB12973"/>
    <property type="gene ID" value="BAB12973"/>
</dbReference>
<dbReference type="KEGG" id="buc:BU263"/>
<dbReference type="PATRIC" id="fig|107806.10.peg.273"/>
<dbReference type="eggNOG" id="COG0015">
    <property type="taxonomic scope" value="Bacteria"/>
</dbReference>
<dbReference type="HOGENOM" id="CLU_025566_2_0_6"/>
<dbReference type="UniPathway" id="UPA00074">
    <property type="reaction ID" value="UER00132"/>
</dbReference>
<dbReference type="UniPathway" id="UPA00075">
    <property type="reaction ID" value="UER00336"/>
</dbReference>
<dbReference type="Proteomes" id="UP000001806">
    <property type="component" value="Chromosome"/>
</dbReference>
<dbReference type="GO" id="GO:0005829">
    <property type="term" value="C:cytosol"/>
    <property type="evidence" value="ECO:0007669"/>
    <property type="project" value="TreeGrafter"/>
</dbReference>
<dbReference type="GO" id="GO:0070626">
    <property type="term" value="F:(S)-2-(5-amino-1-(5-phospho-D-ribosyl)imidazole-4-carboxamido) succinate lyase (fumarate-forming) activity"/>
    <property type="evidence" value="ECO:0007669"/>
    <property type="project" value="RHEA"/>
</dbReference>
<dbReference type="GO" id="GO:0004018">
    <property type="term" value="F:N6-(1,2-dicarboxyethyl)AMP AMP-lyase (fumarate-forming) activity"/>
    <property type="evidence" value="ECO:0007669"/>
    <property type="project" value="InterPro"/>
</dbReference>
<dbReference type="GO" id="GO:0044208">
    <property type="term" value="P:'de novo' AMP biosynthetic process"/>
    <property type="evidence" value="ECO:0007669"/>
    <property type="project" value="UniProtKB-UniPathway"/>
</dbReference>
<dbReference type="GO" id="GO:0006189">
    <property type="term" value="P:'de novo' IMP biosynthetic process"/>
    <property type="evidence" value="ECO:0007669"/>
    <property type="project" value="UniProtKB-UniPathway"/>
</dbReference>
<dbReference type="CDD" id="cd01598">
    <property type="entry name" value="PurB"/>
    <property type="match status" value="1"/>
</dbReference>
<dbReference type="FunFam" id="1.20.200.10:FF:000004">
    <property type="entry name" value="Adenylosuccinate lyase"/>
    <property type="match status" value="1"/>
</dbReference>
<dbReference type="Gene3D" id="1.10.40.30">
    <property type="entry name" value="Fumarase/aspartase (C-terminal domain)"/>
    <property type="match status" value="1"/>
</dbReference>
<dbReference type="Gene3D" id="1.20.200.10">
    <property type="entry name" value="Fumarase/aspartase (Central domain)"/>
    <property type="match status" value="1"/>
</dbReference>
<dbReference type="Gene3D" id="1.10.275.10">
    <property type="entry name" value="Fumarase/aspartase (N-terminal domain)"/>
    <property type="match status" value="1"/>
</dbReference>
<dbReference type="InterPro" id="IPR024083">
    <property type="entry name" value="Fumarase/histidase_N"/>
</dbReference>
<dbReference type="InterPro" id="IPR020557">
    <property type="entry name" value="Fumarate_lyase_CS"/>
</dbReference>
<dbReference type="InterPro" id="IPR000362">
    <property type="entry name" value="Fumarate_lyase_fam"/>
</dbReference>
<dbReference type="InterPro" id="IPR022761">
    <property type="entry name" value="Fumarate_lyase_N"/>
</dbReference>
<dbReference type="InterPro" id="IPR008948">
    <property type="entry name" value="L-Aspartase-like"/>
</dbReference>
<dbReference type="InterPro" id="IPR004769">
    <property type="entry name" value="Pur_lyase"/>
</dbReference>
<dbReference type="InterPro" id="IPR047136">
    <property type="entry name" value="PurB_bact"/>
</dbReference>
<dbReference type="InterPro" id="IPR013539">
    <property type="entry name" value="PurB_C"/>
</dbReference>
<dbReference type="NCBIfam" id="NF006764">
    <property type="entry name" value="PRK09285.1"/>
    <property type="match status" value="1"/>
</dbReference>
<dbReference type="NCBIfam" id="TIGR00928">
    <property type="entry name" value="purB"/>
    <property type="match status" value="1"/>
</dbReference>
<dbReference type="PANTHER" id="PTHR43411">
    <property type="entry name" value="ADENYLOSUCCINATE LYASE"/>
    <property type="match status" value="1"/>
</dbReference>
<dbReference type="PANTHER" id="PTHR43411:SF1">
    <property type="entry name" value="ADENYLOSUCCINATE LYASE"/>
    <property type="match status" value="1"/>
</dbReference>
<dbReference type="Pfam" id="PF08328">
    <property type="entry name" value="ASL_C"/>
    <property type="match status" value="1"/>
</dbReference>
<dbReference type="Pfam" id="PF00206">
    <property type="entry name" value="Lyase_1"/>
    <property type="match status" value="1"/>
</dbReference>
<dbReference type="PRINTS" id="PR00149">
    <property type="entry name" value="FUMRATELYASE"/>
</dbReference>
<dbReference type="SUPFAM" id="SSF48557">
    <property type="entry name" value="L-aspartase-like"/>
    <property type="match status" value="1"/>
</dbReference>
<dbReference type="PROSITE" id="PS00163">
    <property type="entry name" value="FUMARATE_LYASES"/>
    <property type="match status" value="1"/>
</dbReference>
<proteinExistence type="inferred from homology"/>
<reference key="1">
    <citation type="journal article" date="2000" name="Nature">
        <title>Genome sequence of the endocellular bacterial symbiont of aphids Buchnera sp. APS.</title>
        <authorList>
            <person name="Shigenobu S."/>
            <person name="Watanabe H."/>
            <person name="Hattori M."/>
            <person name="Sakaki Y."/>
            <person name="Ishikawa H."/>
        </authorList>
    </citation>
    <scope>NUCLEOTIDE SEQUENCE [LARGE SCALE GENOMIC DNA]</scope>
    <source>
        <strain>APS</strain>
    </source>
</reference>
<accession>P57351</accession>
<organism>
    <name type="scientific">Buchnera aphidicola subsp. Acyrthosiphon pisum (strain APS)</name>
    <name type="common">Acyrthosiphon pisum symbiotic bacterium</name>
    <dbReference type="NCBI Taxonomy" id="107806"/>
    <lineage>
        <taxon>Bacteria</taxon>
        <taxon>Pseudomonadati</taxon>
        <taxon>Pseudomonadota</taxon>
        <taxon>Gammaproteobacteria</taxon>
        <taxon>Enterobacterales</taxon>
        <taxon>Erwiniaceae</taxon>
        <taxon>Buchnera</taxon>
    </lineage>
</organism>
<name>PUR8_BUCAI</name>
<sequence>MELTSLTAISPVDGRYSNLTILLRNIFSEFGFLKYRLNIEVQWLKKIISMSQILDINNIEYKEILFLDSIVEEFNEKDAILIKNIEKETNHDIKALEYFLKNKIAQSKNLLTISEFVHFGCTSEDINNIAYSLMIKDARDKIILPLWYKIISTLKKMVFKYQHYPLLSLTHGQPATPSTMGKEIANFYYRMKRQYIILKKIEILGKINGSTGNYNAHLAAYPDINWHKISKDFITSFGINWNPYTTQIEPHDYIAEFFSCMSLFNTILINFNRDMWGYISLNYFKQRTIDYEIGSSIMPHKVNPIDFENSEGNLGLSNALMNHMITKLPISRWQRDLSDSTVLRNIGVAISYAIIAYNSVLSGINKLEINESELLKNLDKNWSILSEPIQTIMRRYGIKNAYEKLKKLTRGKEINRNVIHTFISSLNIPEEEKKRLKNMTPFNYIGAASQIINEIE</sequence>
<protein>
    <recommendedName>
        <fullName>Adenylosuccinate lyase</fullName>
        <shortName>ASL</shortName>
        <ecNumber evidence="2">4.3.2.2</ecNumber>
    </recommendedName>
    <alternativeName>
        <fullName>Adenylosuccinase</fullName>
        <shortName>ASase</shortName>
    </alternativeName>
</protein>
<comment type="function">
    <text evidence="2">Catalyzes two reactions in de novo purine nucleotide biosynthesis. Catalyzes the breakdown of 5-aminoimidazole- (N-succinylocarboxamide) ribotide (SAICAR or 2-[5-amino-1-(5-phospho-beta-D-ribosyl)imidazole-4-carboxamido]succinate) to 5-aminoimidazole-4-carboxamide ribotide (AICAR or 5-amino-1-(5-phospho-beta-D-ribosyl)imidazole-4-carboxamide) and fumarate, and of adenylosuccinate (ADS or N(6)-(1,2-dicarboxyethyl)-AMP) to adenosine monophosphate (AMP) and fumarate.</text>
</comment>
<comment type="catalytic activity">
    <reaction evidence="2">
        <text>N(6)-(1,2-dicarboxyethyl)-AMP = fumarate + AMP</text>
        <dbReference type="Rhea" id="RHEA:16853"/>
        <dbReference type="ChEBI" id="CHEBI:29806"/>
        <dbReference type="ChEBI" id="CHEBI:57567"/>
        <dbReference type="ChEBI" id="CHEBI:456215"/>
        <dbReference type="EC" id="4.3.2.2"/>
    </reaction>
    <physiologicalReaction direction="left-to-right" evidence="2">
        <dbReference type="Rhea" id="RHEA:16854"/>
    </physiologicalReaction>
</comment>
<comment type="catalytic activity">
    <reaction evidence="2">
        <text>(2S)-2-[5-amino-1-(5-phospho-beta-D-ribosyl)imidazole-4-carboxamido]succinate = 5-amino-1-(5-phospho-beta-D-ribosyl)imidazole-4-carboxamide + fumarate</text>
        <dbReference type="Rhea" id="RHEA:23920"/>
        <dbReference type="ChEBI" id="CHEBI:29806"/>
        <dbReference type="ChEBI" id="CHEBI:58443"/>
        <dbReference type="ChEBI" id="CHEBI:58475"/>
        <dbReference type="EC" id="4.3.2.2"/>
    </reaction>
    <physiologicalReaction direction="left-to-right" evidence="2">
        <dbReference type="Rhea" id="RHEA:23921"/>
    </physiologicalReaction>
</comment>
<comment type="pathway">
    <text>Purine metabolism; AMP biosynthesis via de novo pathway; AMP from IMP: step 2/2.</text>
</comment>
<comment type="pathway">
    <text>Purine metabolism; IMP biosynthesis via de novo pathway; 5-amino-1-(5-phospho-D-ribosyl)imidazole-4-carboxamide from 5-amino-1-(5-phospho-D-ribosyl)imidazole-4-carboxylate: step 2/2.</text>
</comment>
<comment type="subunit">
    <text evidence="1">Homotetramer. Residues from neighboring subunits contribute catalytic and substrate-binding residues to each active site (By similarity).</text>
</comment>
<comment type="similarity">
    <text evidence="3">Belongs to the lyase 1 family. Adenylosuccinate lyase subfamily.</text>
</comment>
<feature type="chain" id="PRO_0000137874" description="Adenylosuccinate lyase">
    <location>
        <begin position="1"/>
        <end position="456"/>
    </location>
</feature>
<feature type="active site" description="Proton donor/acceptor" evidence="2">
    <location>
        <position position="171"/>
    </location>
</feature>
<feature type="active site" description="Proton donor/acceptor" evidence="2">
    <location>
        <position position="295"/>
    </location>
</feature>
<feature type="binding site" evidence="2">
    <location>
        <begin position="15"/>
        <end position="16"/>
    </location>
    <ligand>
        <name>N(6)-(1,2-dicarboxyethyl)-AMP</name>
        <dbReference type="ChEBI" id="CHEBI:57567"/>
    </ligand>
</feature>
<feature type="binding site" evidence="2">
    <location>
        <begin position="90"/>
        <end position="92"/>
    </location>
    <ligand>
        <name>N(6)-(1,2-dicarboxyethyl)-AMP</name>
        <dbReference type="ChEBI" id="CHEBI:57567"/>
    </ligand>
</feature>
<feature type="binding site" evidence="2">
    <location>
        <begin position="122"/>
        <end position="123"/>
    </location>
    <ligand>
        <name>N(6)-(1,2-dicarboxyethyl)-AMP</name>
        <dbReference type="ChEBI" id="CHEBI:57567"/>
    </ligand>
</feature>
<feature type="binding site" evidence="2">
    <location>
        <position position="247"/>
    </location>
    <ligand>
        <name>N(6)-(1,2-dicarboxyethyl)-AMP</name>
        <dbReference type="ChEBI" id="CHEBI:57567"/>
    </ligand>
</feature>
<feature type="binding site" evidence="2">
    <location>
        <position position="296"/>
    </location>
    <ligand>
        <name>N(6)-(1,2-dicarboxyethyl)-AMP</name>
        <dbReference type="ChEBI" id="CHEBI:57567"/>
    </ligand>
</feature>
<feature type="binding site" evidence="2">
    <location>
        <begin position="301"/>
        <end position="303"/>
    </location>
    <ligand>
        <name>N(6)-(1,2-dicarboxyethyl)-AMP</name>
        <dbReference type="ChEBI" id="CHEBI:57567"/>
    </ligand>
</feature>
<feature type="binding site" evidence="2">
    <location>
        <position position="309"/>
    </location>
    <ligand>
        <name>N(6)-(1,2-dicarboxyethyl)-AMP</name>
        <dbReference type="ChEBI" id="CHEBI:57567"/>
    </ligand>
</feature>
<feature type="binding site" evidence="2">
    <location>
        <position position="335"/>
    </location>
    <ligand>
        <name>N(6)-(1,2-dicarboxyethyl)-AMP</name>
        <dbReference type="ChEBI" id="CHEBI:57567"/>
    </ligand>
</feature>
<feature type="binding site" evidence="2">
    <location>
        <begin position="340"/>
        <end position="344"/>
    </location>
    <ligand>
        <name>N(6)-(1,2-dicarboxyethyl)-AMP</name>
        <dbReference type="ChEBI" id="CHEBI:57567"/>
    </ligand>
</feature>
<gene>
    <name type="primary">purB</name>
    <name type="ordered locus">BU263</name>
</gene>